<accession>O65195</accession>
<dbReference type="EC" id="5.5.1.4" evidence="2"/>
<dbReference type="EMBL" id="AF056325">
    <property type="protein sequence ID" value="AAC17133.1"/>
    <property type="molecule type" value="mRNA"/>
</dbReference>
<dbReference type="PIR" id="T04399">
    <property type="entry name" value="T04399"/>
</dbReference>
<dbReference type="SMR" id="O65195"/>
<dbReference type="IntAct" id="O65195">
    <property type="interactions" value="1"/>
</dbReference>
<dbReference type="UniPathway" id="UPA00823">
    <property type="reaction ID" value="UER00787"/>
</dbReference>
<dbReference type="ExpressionAtlas" id="O65195">
    <property type="expression patterns" value="baseline and differential"/>
</dbReference>
<dbReference type="GO" id="GO:0005829">
    <property type="term" value="C:cytosol"/>
    <property type="evidence" value="ECO:0007669"/>
    <property type="project" value="UniProtKB-SubCell"/>
</dbReference>
<dbReference type="GO" id="GO:0005634">
    <property type="term" value="C:nucleus"/>
    <property type="evidence" value="ECO:0007669"/>
    <property type="project" value="UniProtKB-SubCell"/>
</dbReference>
<dbReference type="GO" id="GO:0004512">
    <property type="term" value="F:inositol-3-phosphate synthase activity"/>
    <property type="evidence" value="ECO:0007669"/>
    <property type="project" value="UniProtKB-EC"/>
</dbReference>
<dbReference type="GO" id="GO:0006021">
    <property type="term" value="P:inositol biosynthetic process"/>
    <property type="evidence" value="ECO:0007669"/>
    <property type="project" value="UniProtKB-UniPathway"/>
</dbReference>
<dbReference type="GO" id="GO:0008654">
    <property type="term" value="P:phospholipid biosynthetic process"/>
    <property type="evidence" value="ECO:0007669"/>
    <property type="project" value="UniProtKB-KW"/>
</dbReference>
<dbReference type="FunFam" id="3.30.360.10:FF:000040">
    <property type="entry name" value="Inositol 1-phosphate synthase"/>
    <property type="match status" value="1"/>
</dbReference>
<dbReference type="FunFam" id="3.40.50.720:FF:000107">
    <property type="entry name" value="inositol-3-phosphate synthase"/>
    <property type="match status" value="1"/>
</dbReference>
<dbReference type="FunFam" id="3.40.50.720:FF:000069">
    <property type="entry name" value="Inositol-3-phosphate synthase 1"/>
    <property type="match status" value="1"/>
</dbReference>
<dbReference type="Gene3D" id="3.40.50.720">
    <property type="entry name" value="NAD(P)-binding Rossmann-like Domain"/>
    <property type="match status" value="2"/>
</dbReference>
<dbReference type="InterPro" id="IPR002587">
    <property type="entry name" value="Myo-inos-1-P_Synthase"/>
</dbReference>
<dbReference type="InterPro" id="IPR013021">
    <property type="entry name" value="Myo-inos-1-P_Synthase_GAPDH"/>
</dbReference>
<dbReference type="InterPro" id="IPR036291">
    <property type="entry name" value="NAD(P)-bd_dom_sf"/>
</dbReference>
<dbReference type="PANTHER" id="PTHR11510">
    <property type="entry name" value="MYO-INOSITOL-1 PHOSPHATE SYNTHASE"/>
    <property type="match status" value="1"/>
</dbReference>
<dbReference type="Pfam" id="PF01658">
    <property type="entry name" value="Inos-1-P_synth"/>
    <property type="match status" value="1"/>
</dbReference>
<dbReference type="Pfam" id="PF07994">
    <property type="entry name" value="NAD_binding_5"/>
    <property type="match status" value="1"/>
</dbReference>
<dbReference type="PIRSF" id="PIRSF015578">
    <property type="entry name" value="Myoinos-ppht_syn"/>
    <property type="match status" value="1"/>
</dbReference>
<dbReference type="SUPFAM" id="SSF55347">
    <property type="entry name" value="Glyceraldehyde-3-phosphate dehydrogenase-like, C-terminal domain"/>
    <property type="match status" value="1"/>
</dbReference>
<dbReference type="SUPFAM" id="SSF51735">
    <property type="entry name" value="NAD(P)-binding Rossmann-fold domains"/>
    <property type="match status" value="1"/>
</dbReference>
<name>INO1_HORVU</name>
<organism>
    <name type="scientific">Hordeum vulgare</name>
    <name type="common">Barley</name>
    <dbReference type="NCBI Taxonomy" id="4513"/>
    <lineage>
        <taxon>Eukaryota</taxon>
        <taxon>Viridiplantae</taxon>
        <taxon>Streptophyta</taxon>
        <taxon>Embryophyta</taxon>
        <taxon>Tracheophyta</taxon>
        <taxon>Spermatophyta</taxon>
        <taxon>Magnoliopsida</taxon>
        <taxon>Liliopsida</taxon>
        <taxon>Poales</taxon>
        <taxon>Poaceae</taxon>
        <taxon>BOP clade</taxon>
        <taxon>Pooideae</taxon>
        <taxon>Triticodae</taxon>
        <taxon>Triticeae</taxon>
        <taxon>Hordeinae</taxon>
        <taxon>Hordeum</taxon>
    </lineage>
</organism>
<proteinExistence type="evidence at transcript level"/>
<sequence length="510" mass="56173">MFIESFRVESPKVRYGAGEIESEYRYDTTELVHESHDGASKWVVRPKSVNYHFKTNTTVPKLGVMLVGWGGNNGSTLMAGVIANREGISWATKDKVQQANYFGSLTQASTIRVGSYNGEEIYAPFKSLLPMVNPDDLVFGGWDISSMNLADAMTRAKVLDIDLQKQLRPYMESMCPLPGIYDPDFIAANQGSRANNVIKGTKKEQMEQVIKDIREFKEKNKVDKVVVLWTANTERYSNVSVGLNDTTENLLASVDKNEAEISPSTLYAIACVMEGVPFINGSPQNTFVPGLIDLAIKNDCLIGGDDFKSGQTKMKSVLVDFLVGAGIKPTSIVSYNHLGNNDGMNLSAPQTFRSKEISKSNVVDDMVSSNAILYEPGEHPDHVVVIKYVPYVGDSKRAMDEYTSEIFMGGKSTIVLHNTCEDSLLRAPIILDLVLLAELSTRIQLKAEGEDKLHSFHPVATILSYLTKAPLVPPGTPVVNALAKQRAMLENIMRACVGLAPENNMILEYK</sequence>
<keyword id="KW-0963">Cytoplasm</keyword>
<keyword id="KW-0398">Inositol biosynthesis</keyword>
<keyword id="KW-0413">Isomerase</keyword>
<keyword id="KW-0444">Lipid biosynthesis</keyword>
<keyword id="KW-0443">Lipid metabolism</keyword>
<keyword id="KW-0520">NAD</keyword>
<keyword id="KW-0539">Nucleus</keyword>
<keyword id="KW-0594">Phospholipid biosynthesis</keyword>
<keyword id="KW-1208">Phospholipid metabolism</keyword>
<reference key="1">
    <citation type="submission" date="1998-03" db="EMBL/GenBank/DDBJ databases">
        <title>Linkage mapping maize and barley myo-inositol 1-phosphate synthase genes.</title>
        <authorList>
            <person name="Larson S.R."/>
            <person name="Raboy V."/>
        </authorList>
    </citation>
    <scope>NUCLEOTIDE SEQUENCE [MRNA]</scope>
    <source>
        <strain>cv. Harrington</strain>
    </source>
</reference>
<comment type="function">
    <text evidence="2">Key enzyme in myo-inositol biosynthesis pathway that catalyzes the conversion of glucose 6-phosphate to 1-myo-inositol 1-phosphate in a NAD-dependent manner.</text>
</comment>
<comment type="catalytic activity">
    <reaction evidence="2">
        <text>D-glucose 6-phosphate = 1D-myo-inositol 3-phosphate</text>
        <dbReference type="Rhea" id="RHEA:10716"/>
        <dbReference type="ChEBI" id="CHEBI:58401"/>
        <dbReference type="ChEBI" id="CHEBI:61548"/>
        <dbReference type="EC" id="5.5.1.4"/>
    </reaction>
</comment>
<comment type="cofactor">
    <cofactor evidence="2">
        <name>NAD(+)</name>
        <dbReference type="ChEBI" id="CHEBI:57540"/>
    </cofactor>
</comment>
<comment type="pathway">
    <text>Polyol metabolism; myo-inositol biosynthesis; myo-inositol from D-glucose 6-phosphate: step 1/2.</text>
</comment>
<comment type="subcellular location">
    <subcellularLocation>
        <location evidence="2">Cytoplasm</location>
        <location evidence="2">Cytosol</location>
    </subcellularLocation>
    <subcellularLocation>
        <location evidence="2">Nucleus</location>
    </subcellularLocation>
</comment>
<comment type="similarity">
    <text evidence="3">Belongs to the myo-inositol 1-phosphate synthase family.</text>
</comment>
<evidence type="ECO:0000250" key="1">
    <source>
        <dbReference type="UniProtKB" id="P11986"/>
    </source>
</evidence>
<evidence type="ECO:0000250" key="2">
    <source>
        <dbReference type="UniProtKB" id="P42801"/>
    </source>
</evidence>
<evidence type="ECO:0000305" key="3"/>
<protein>
    <recommendedName>
        <fullName>Inositol-3-phosphate synthase</fullName>
        <shortName>MIP synthase</shortName>
        <ecNumber evidence="2">5.5.1.4</ecNumber>
    </recommendedName>
    <alternativeName>
        <fullName>Myo-inositol 1-phosphate synthase</fullName>
        <shortName>IPS</shortName>
        <shortName>MI-1-P synthase</shortName>
    </alternativeName>
</protein>
<feature type="chain" id="PRO_0000195191" description="Inositol-3-phosphate synthase">
    <location>
        <begin position="1"/>
        <end position="510"/>
    </location>
</feature>
<feature type="binding site" evidence="1">
    <location>
        <position position="70"/>
    </location>
    <ligand>
        <name>NAD(+)</name>
        <dbReference type="ChEBI" id="CHEBI:57540"/>
    </ligand>
</feature>
<feature type="binding site" evidence="1">
    <location>
        <position position="71"/>
    </location>
    <ligand>
        <name>NAD(+)</name>
        <dbReference type="ChEBI" id="CHEBI:57540"/>
    </ligand>
</feature>
<feature type="binding site" evidence="1">
    <location>
        <position position="72"/>
    </location>
    <ligand>
        <name>NAD(+)</name>
        <dbReference type="ChEBI" id="CHEBI:57540"/>
    </ligand>
</feature>
<feature type="binding site" evidence="1">
    <location>
        <position position="73"/>
    </location>
    <ligand>
        <name>NAD(+)</name>
        <dbReference type="ChEBI" id="CHEBI:57540"/>
    </ligand>
</feature>
<feature type="binding site" evidence="1">
    <location>
        <position position="143"/>
    </location>
    <ligand>
        <name>NAD(+)</name>
        <dbReference type="ChEBI" id="CHEBI:57540"/>
    </ligand>
</feature>
<feature type="binding site" evidence="1">
    <location>
        <position position="180"/>
    </location>
    <ligand>
        <name>NAD(+)</name>
        <dbReference type="ChEBI" id="CHEBI:57540"/>
    </ligand>
</feature>
<feature type="binding site" evidence="1">
    <location>
        <position position="190"/>
    </location>
    <ligand>
        <name>NAD(+)</name>
        <dbReference type="ChEBI" id="CHEBI:57540"/>
    </ligand>
</feature>
<feature type="binding site" evidence="1">
    <location>
        <position position="193"/>
    </location>
    <ligand>
        <name>NAD(+)</name>
        <dbReference type="ChEBI" id="CHEBI:57540"/>
    </ligand>
</feature>
<feature type="binding site" evidence="1">
    <location>
        <position position="230"/>
    </location>
    <ligand>
        <name>NAD(+)</name>
        <dbReference type="ChEBI" id="CHEBI:57540"/>
    </ligand>
</feature>
<feature type="binding site" evidence="1">
    <location>
        <position position="231"/>
    </location>
    <ligand>
        <name>NAD(+)</name>
        <dbReference type="ChEBI" id="CHEBI:57540"/>
    </ligand>
</feature>
<feature type="binding site" evidence="1">
    <location>
        <position position="232"/>
    </location>
    <ligand>
        <name>NAD(+)</name>
        <dbReference type="ChEBI" id="CHEBI:57540"/>
    </ligand>
</feature>
<feature type="binding site" evidence="1">
    <location>
        <position position="233"/>
    </location>
    <ligand>
        <name>NAD(+)</name>
        <dbReference type="ChEBI" id="CHEBI:57540"/>
    </ligand>
</feature>
<feature type="binding site" evidence="1">
    <location>
        <position position="281"/>
    </location>
    <ligand>
        <name>NAD(+)</name>
        <dbReference type="ChEBI" id="CHEBI:57540"/>
    </ligand>
</feature>
<feature type="binding site" evidence="1">
    <location>
        <position position="282"/>
    </location>
    <ligand>
        <name>NAD(+)</name>
        <dbReference type="ChEBI" id="CHEBI:57540"/>
    </ligand>
</feature>
<feature type="binding site" evidence="1">
    <location>
        <position position="306"/>
    </location>
    <ligand>
        <name>NAD(+)</name>
        <dbReference type="ChEBI" id="CHEBI:57540"/>
    </ligand>
</feature>
<feature type="binding site" evidence="1">
    <location>
        <position position="309"/>
    </location>
    <ligand>
        <name>NAD(+)</name>
        <dbReference type="ChEBI" id="CHEBI:57540"/>
    </ligand>
</feature>
<feature type="binding site" evidence="1">
    <location>
        <position position="340"/>
    </location>
    <ligand>
        <name>NAD(+)</name>
        <dbReference type="ChEBI" id="CHEBI:57540"/>
    </ligand>
</feature>
<feature type="binding site" evidence="1">
    <location>
        <position position="341"/>
    </location>
    <ligand>
        <name>NAD(+)</name>
        <dbReference type="ChEBI" id="CHEBI:57540"/>
    </ligand>
</feature>
<feature type="binding site" evidence="1">
    <location>
        <position position="342"/>
    </location>
    <ligand>
        <name>NAD(+)</name>
        <dbReference type="ChEBI" id="CHEBI:57540"/>
    </ligand>
</feature>
<feature type="binding site" evidence="1">
    <location>
        <position position="355"/>
    </location>
    <ligand>
        <name>NAD(+)</name>
        <dbReference type="ChEBI" id="CHEBI:57540"/>
    </ligand>
</feature>
<feature type="binding site" evidence="1">
    <location>
        <position position="393"/>
    </location>
    <ligand>
        <name>NAD(+)</name>
        <dbReference type="ChEBI" id="CHEBI:57540"/>
    </ligand>
</feature>
<feature type="binding site" evidence="1">
    <location>
        <position position="394"/>
    </location>
    <ligand>
        <name>NAD(+)</name>
        <dbReference type="ChEBI" id="CHEBI:57540"/>
    </ligand>
</feature>
<feature type="binding site" evidence="1">
    <location>
        <position position="422"/>
    </location>
    <ligand>
        <name>NAD(+)</name>
        <dbReference type="ChEBI" id="CHEBI:57540"/>
    </ligand>
</feature>
<feature type="binding site" evidence="1">
    <location>
        <position position="423"/>
    </location>
    <ligand>
        <name>NAD(+)</name>
        <dbReference type="ChEBI" id="CHEBI:57540"/>
    </ligand>
</feature>